<evidence type="ECO:0000256" key="1">
    <source>
        <dbReference type="SAM" id="MobiDB-lite"/>
    </source>
</evidence>
<evidence type="ECO:0000269" key="2">
    <source>
    </source>
</evidence>
<evidence type="ECO:0000305" key="3"/>
<reference key="1">
    <citation type="journal article" date="1994" name="J. Mol. Evol.">
        <title>Molecular evolution of the HSP70 multigene family.</title>
        <authorList>
            <person name="Boorstein W.R."/>
            <person name="Ziegelhoffer T."/>
            <person name="Craig E.A."/>
        </authorList>
    </citation>
    <scope>NUCLEOTIDE SEQUENCE</scope>
</reference>
<reference key="2">
    <citation type="journal article" date="1994" name="EMBO J.">
        <title>Complete DNA sequence of yeast chromosome II.</title>
        <authorList>
            <person name="Feldmann H."/>
            <person name="Aigle M."/>
            <person name="Aljinovic G."/>
            <person name="Andre B."/>
            <person name="Baclet M.C."/>
            <person name="Barthe C."/>
            <person name="Baur A."/>
            <person name="Becam A.-M."/>
            <person name="Biteau N."/>
            <person name="Boles E."/>
            <person name="Brandt T."/>
            <person name="Brendel M."/>
            <person name="Brueckner M."/>
            <person name="Bussereau F."/>
            <person name="Christiansen C."/>
            <person name="Contreras R."/>
            <person name="Crouzet M."/>
            <person name="Cziepluch C."/>
            <person name="Demolis N."/>
            <person name="Delaveau T."/>
            <person name="Doignon F."/>
            <person name="Domdey H."/>
            <person name="Duesterhus S."/>
            <person name="Dubois E."/>
            <person name="Dujon B."/>
            <person name="El Bakkoury M."/>
            <person name="Entian K.-D."/>
            <person name="Feuermann M."/>
            <person name="Fiers W."/>
            <person name="Fobo G.M."/>
            <person name="Fritz C."/>
            <person name="Gassenhuber J."/>
            <person name="Glansdorff N."/>
            <person name="Goffeau A."/>
            <person name="Grivell L.A."/>
            <person name="de Haan M."/>
            <person name="Hein C."/>
            <person name="Herbert C.J."/>
            <person name="Hollenberg C.P."/>
            <person name="Holmstroem K."/>
            <person name="Jacq C."/>
            <person name="Jacquet M."/>
            <person name="Jauniaux J.-C."/>
            <person name="Jonniaux J.-L."/>
            <person name="Kallesoee T."/>
            <person name="Kiesau P."/>
            <person name="Kirchrath L."/>
            <person name="Koetter P."/>
            <person name="Korol S."/>
            <person name="Liebl S."/>
            <person name="Logghe M."/>
            <person name="Lohan A.J.E."/>
            <person name="Louis E.J."/>
            <person name="Li Z.Y."/>
            <person name="Maat M.J."/>
            <person name="Mallet L."/>
            <person name="Mannhaupt G."/>
            <person name="Messenguy F."/>
            <person name="Miosga T."/>
            <person name="Molemans F."/>
            <person name="Mueller S."/>
            <person name="Nasr F."/>
            <person name="Obermaier B."/>
            <person name="Perea J."/>
            <person name="Pierard A."/>
            <person name="Piravandi E."/>
            <person name="Pohl F.M."/>
            <person name="Pohl T.M."/>
            <person name="Potier S."/>
            <person name="Proft M."/>
            <person name="Purnelle B."/>
            <person name="Ramezani Rad M."/>
            <person name="Rieger M."/>
            <person name="Rose M."/>
            <person name="Schaaff-Gerstenschlaeger I."/>
            <person name="Scherens B."/>
            <person name="Schwarzlose C."/>
            <person name="Skala J."/>
            <person name="Slonimski P.P."/>
            <person name="Smits P.H.M."/>
            <person name="Souciet J.-L."/>
            <person name="Steensma H.Y."/>
            <person name="Stucka R."/>
            <person name="Urrestarazu L.A."/>
            <person name="van der Aart Q.J.M."/>
            <person name="Van Dyck L."/>
            <person name="Vassarotti A."/>
            <person name="Vetter I."/>
            <person name="Vierendeels F."/>
            <person name="Vissers S."/>
            <person name="Wagner G."/>
            <person name="de Wergifosse P."/>
            <person name="Wolfe K.H."/>
            <person name="Zagulski M."/>
            <person name="Zimmermann F.K."/>
            <person name="Mewes H.-W."/>
            <person name="Kleine K."/>
        </authorList>
    </citation>
    <scope>NUCLEOTIDE SEQUENCE [LARGE SCALE GENOMIC DNA]</scope>
    <source>
        <strain>ATCC 204508 / S288c</strain>
    </source>
</reference>
<reference key="3">
    <citation type="journal article" date="2014" name="G3 (Bethesda)">
        <title>The reference genome sequence of Saccharomyces cerevisiae: Then and now.</title>
        <authorList>
            <person name="Engel S.R."/>
            <person name="Dietrich F.S."/>
            <person name="Fisk D.G."/>
            <person name="Binkley G."/>
            <person name="Balakrishnan R."/>
            <person name="Costanzo M.C."/>
            <person name="Dwight S.S."/>
            <person name="Hitz B.C."/>
            <person name="Karra K."/>
            <person name="Nash R.S."/>
            <person name="Weng S."/>
            <person name="Wong E.D."/>
            <person name="Lloyd P."/>
            <person name="Skrzypek M.S."/>
            <person name="Miyasato S.R."/>
            <person name="Simison M."/>
            <person name="Cherry J.M."/>
        </authorList>
    </citation>
    <scope>GENOME REANNOTATION</scope>
    <source>
        <strain>ATCC 204508 / S288c</strain>
    </source>
</reference>
<reference key="4">
    <citation type="journal article" date="1994" name="Yeast">
        <title>The two genes encoding yeast ribosomal protein S8 reside on different chromosomes, and are closely linked to the hsp70 stress protein genes SSA3 and SSA4.</title>
        <authorList>
            <person name="Logghe M."/>
            <person name="Molemans F."/>
            <person name="Fiers W."/>
            <person name="Contreras R."/>
        </authorList>
    </citation>
    <scope>NUCLEOTIDE SEQUENCE [GENOMIC DNA] OF 1-628</scope>
    <source>
        <strain>ATCC 204508 / S288c</strain>
    </source>
</reference>
<reference key="5">
    <citation type="journal article" date="1991" name="Mol. Cell. Biol.">
        <title>AAR2, a gene for splicing pre-mRNA of the MATa1 cistron in cell type control of Saccharomyces cerevisiae.</title>
        <authorList>
            <person name="Nakazawa N."/>
            <person name="Harashima S."/>
            <person name="Oshima Y."/>
        </authorList>
    </citation>
    <scope>NUCLEOTIDE SEQUENCE [GENOMIC DNA] OF 1-205</scope>
</reference>
<reference key="6">
    <citation type="journal article" date="1990" name="Mol. Cell. Biol.">
        <title>Transcriptional regulation of SSA3, an HSP70 gene from Saccharomyces cerevisiae.</title>
        <authorList>
            <person name="Boorstein W.R."/>
            <person name="Craig E.A."/>
        </authorList>
    </citation>
    <scope>NUCLEOTIDE SEQUENCE [GENOMIC DNA] OF 1-35</scope>
</reference>
<reference key="7">
    <citation type="journal article" date="1989" name="Curr. Genet.">
        <title>Isolation and complete sequence of the yeast isoleucyl-tRNA synthetase gene (ILS1).</title>
        <authorList>
            <person name="Martindale D.W."/>
            <person name="Gu Z.M."/>
            <person name="Csank C."/>
        </authorList>
    </citation>
    <scope>NUCLEOTIDE SEQUENCE [GENOMIC DNA] OF 602-649</scope>
    <source>
        <strain>ATCC 204626 / S288c / A364A</strain>
    </source>
</reference>
<reference key="8">
    <citation type="journal article" date="2003" name="Nature">
        <title>Global analysis of protein expression in yeast.</title>
        <authorList>
            <person name="Ghaemmaghami S."/>
            <person name="Huh W.-K."/>
            <person name="Bower K."/>
            <person name="Howson R.W."/>
            <person name="Belle A."/>
            <person name="Dephoure N."/>
            <person name="O'Shea E.K."/>
            <person name="Weissman J.S."/>
        </authorList>
    </citation>
    <scope>LEVEL OF PROTEIN EXPRESSION [LARGE SCALE ANALYSIS]</scope>
</reference>
<proteinExistence type="evidence at protein level"/>
<comment type="subcellular location">
    <subcellularLocation>
        <location>Cytoplasm</location>
    </subcellularLocation>
</comment>
<comment type="miscellaneous">
    <text evidence="2">Present with 6440 molecules/cell in log phase SD medium.</text>
</comment>
<comment type="similarity">
    <text evidence="3">Belongs to the heat shock protein 70 family.</text>
</comment>
<feature type="chain" id="PRO_0000078387" description="Heat shock protein SSA3">
    <location>
        <begin position="1"/>
        <end position="649"/>
    </location>
</feature>
<feature type="region of interest" description="Disordered" evidence="1">
    <location>
        <begin position="608"/>
        <end position="649"/>
    </location>
</feature>
<feature type="compositionally biased region" description="Gly residues" evidence="1">
    <location>
        <begin position="611"/>
        <end position="626"/>
    </location>
</feature>
<feature type="sequence conflict" description="In Ref. 7; CAA30732." evidence="3" ref="7">
    <original>G</original>
    <variation>A</variation>
    <location>
        <position position="620"/>
    </location>
</feature>
<gene>
    <name type="primary">SSA3</name>
    <name type="ordered locus">YBL075C</name>
    <name type="ORF">YBL06.07</name>
    <name type="ORF">YBL0610</name>
</gene>
<protein>
    <recommendedName>
        <fullName>Heat shock protein SSA3</fullName>
    </recommendedName>
</protein>
<name>HSP73_YEAST</name>
<accession>P09435</accession>
<accession>D6VPS7</accession>
<accession>P18862</accession>
<sequence length="649" mass="70547">MSRAVGIDLGTTYSCVAHFSNDRVEIIANDQGNRTTPSYVAFTDTERLIGDAAKNQAAINPHNTVFDAKRLIGRKFDDPEVTTDAKHFPFKVISRDGKPVVQVEYKGETKTFTPEEISSMVLSKMKETAENYLGTTVNDAVVTVPAYFNDSQRQATKDAGTIAGMNVLRIINEPTAAAIAYGLDKKGRAEHNVLIFDLGGGTFDVSLLSIDEGVFEVKATAGDTHLGGEDFDNRLVNHLATEFKRKTKKDISNNQRSLRRLRTAAERAKRALSSSSQTSIEIDSLFEGMDFYTSLTRARFEELCADLFRSTLEPVEKVLKDSKLDKSQIDEIVLVGGSTRIPKIQKLVSDFFNGKEPNRSINPDEAVAYGAAVQAAILTGDQSTKTQDLLLLDVAPLSLGIETAGGIMTKLIPRNSTIPTKKSETFSTYADNQPGVLIQVFEGERTRTKDNNLLGKFELSGIPPAPRGVPQIDVTFDIDANGILNVSALEKGTGKSNKITITNDKGRLSKDDIDRMVSEAEKYRADDEREAERVQAKNQLESYAFTLKNTINEASFKEKVGEDDAKRLETASQETIDWLDASQAASTDEYKDRQKELEGIANPIMTKFYGAGAGAGPGAGESGGFPGSMPNSGATGGGEDTGPTVEEVD</sequence>
<dbReference type="EMBL" id="M97225">
    <property type="protein sequence ID" value="AAC37398.1"/>
    <property type="molecule type" value="Unassigned_DNA"/>
</dbReference>
<dbReference type="EMBL" id="Z35836">
    <property type="protein sequence ID" value="CAA84896.1"/>
    <property type="molecule type" value="Genomic_DNA"/>
</dbReference>
<dbReference type="EMBL" id="Z26879">
    <property type="protein sequence ID" value="CAA81523.1"/>
    <property type="molecule type" value="Genomic_DNA"/>
</dbReference>
<dbReference type="EMBL" id="D90455">
    <property type="status" value="NOT_ANNOTATED_CDS"/>
    <property type="molecule type" value="Genomic_DNA"/>
</dbReference>
<dbReference type="EMBL" id="M36115">
    <property type="protein sequence ID" value="AAA35097.1"/>
    <property type="molecule type" value="Genomic_DNA"/>
</dbReference>
<dbReference type="EMBL" id="X07886">
    <property type="protein sequence ID" value="CAA30732.1"/>
    <property type="status" value="ALT_SEQ"/>
    <property type="molecule type" value="Genomic_DNA"/>
</dbReference>
<dbReference type="EMBL" id="BK006936">
    <property type="protein sequence ID" value="DAA07047.1"/>
    <property type="molecule type" value="Genomic_DNA"/>
</dbReference>
<dbReference type="PIR" id="S36753">
    <property type="entry name" value="S36753"/>
</dbReference>
<dbReference type="RefSeq" id="NP_009478.1">
    <property type="nucleotide sequence ID" value="NM_001178315.1"/>
</dbReference>
<dbReference type="SMR" id="P09435"/>
<dbReference type="BioGRID" id="32627">
    <property type="interactions" value="156"/>
</dbReference>
<dbReference type="DIP" id="DIP-2266N"/>
<dbReference type="FunCoup" id="P09435">
    <property type="interactions" value="1430"/>
</dbReference>
<dbReference type="IntAct" id="P09435">
    <property type="interactions" value="62"/>
</dbReference>
<dbReference type="MINT" id="P09435"/>
<dbReference type="STRING" id="4932.YBL075C"/>
<dbReference type="GlyGen" id="P09435">
    <property type="glycosylation" value="1 site"/>
</dbReference>
<dbReference type="iPTMnet" id="P09435"/>
<dbReference type="PaxDb" id="4932-YBL075C"/>
<dbReference type="PeptideAtlas" id="P09435"/>
<dbReference type="EnsemblFungi" id="YBL075C_mRNA">
    <property type="protein sequence ID" value="YBL075C"/>
    <property type="gene ID" value="YBL075C"/>
</dbReference>
<dbReference type="GeneID" id="852203"/>
<dbReference type="KEGG" id="sce:YBL075C"/>
<dbReference type="AGR" id="SGD:S000000171"/>
<dbReference type="SGD" id="S000000171">
    <property type="gene designation" value="SSA3"/>
</dbReference>
<dbReference type="VEuPathDB" id="FungiDB:YBL075C"/>
<dbReference type="eggNOG" id="KOG0101">
    <property type="taxonomic scope" value="Eukaryota"/>
</dbReference>
<dbReference type="GeneTree" id="ENSGT00940000176322"/>
<dbReference type="HOGENOM" id="CLU_005965_3_0_1"/>
<dbReference type="InParanoid" id="P09435"/>
<dbReference type="OMA" id="VCKPIVT"/>
<dbReference type="OrthoDB" id="2401965at2759"/>
<dbReference type="BioCyc" id="YEAST:G3O-28967-MONOMER"/>
<dbReference type="Reactome" id="R-SCE-3371453">
    <property type="pathway name" value="Regulation of HSF1-mediated heat shock response"/>
</dbReference>
<dbReference type="Reactome" id="R-SCE-3371497">
    <property type="pathway name" value="HSP90 chaperone cycle for steroid hormone receptors (SHR) in the presence of ligand"/>
</dbReference>
<dbReference type="Reactome" id="R-SCE-3371571">
    <property type="pathway name" value="HSF1-dependent transactivation"/>
</dbReference>
<dbReference type="Reactome" id="R-SCE-6798695">
    <property type="pathway name" value="Neutrophil degranulation"/>
</dbReference>
<dbReference type="Reactome" id="R-SCE-9841251">
    <property type="pathway name" value="Mitochondrial unfolded protein response (UPRmt)"/>
</dbReference>
<dbReference type="BioGRID-ORCS" id="852203">
    <property type="hits" value="1 hit in 10 CRISPR screens"/>
</dbReference>
<dbReference type="CD-CODE" id="E03F929F">
    <property type="entry name" value="Stress granule"/>
</dbReference>
<dbReference type="PRO" id="PR:P09435"/>
<dbReference type="Proteomes" id="UP000002311">
    <property type="component" value="Chromosome II"/>
</dbReference>
<dbReference type="RNAct" id="P09435">
    <property type="molecule type" value="protein"/>
</dbReference>
<dbReference type="GO" id="GO:0005737">
    <property type="term" value="C:cytoplasm"/>
    <property type="evidence" value="ECO:0000318"/>
    <property type="project" value="GO_Central"/>
</dbReference>
<dbReference type="GO" id="GO:0005829">
    <property type="term" value="C:cytosol"/>
    <property type="evidence" value="ECO:0000314"/>
    <property type="project" value="SGD"/>
</dbReference>
<dbReference type="GO" id="GO:0005634">
    <property type="term" value="C:nucleus"/>
    <property type="evidence" value="ECO:0000318"/>
    <property type="project" value="GO_Central"/>
</dbReference>
<dbReference type="GO" id="GO:0005886">
    <property type="term" value="C:plasma membrane"/>
    <property type="evidence" value="ECO:0000318"/>
    <property type="project" value="GO_Central"/>
</dbReference>
<dbReference type="GO" id="GO:0005524">
    <property type="term" value="F:ATP binding"/>
    <property type="evidence" value="ECO:0007669"/>
    <property type="project" value="UniProtKB-KW"/>
</dbReference>
<dbReference type="GO" id="GO:0016887">
    <property type="term" value="F:ATP hydrolysis activity"/>
    <property type="evidence" value="ECO:0000316"/>
    <property type="project" value="SGD"/>
</dbReference>
<dbReference type="GO" id="GO:0140662">
    <property type="term" value="F:ATP-dependent protein folding chaperone"/>
    <property type="evidence" value="ECO:0007669"/>
    <property type="project" value="InterPro"/>
</dbReference>
<dbReference type="GO" id="GO:0031072">
    <property type="term" value="F:heat shock protein binding"/>
    <property type="evidence" value="ECO:0000318"/>
    <property type="project" value="GO_Central"/>
</dbReference>
<dbReference type="GO" id="GO:0044183">
    <property type="term" value="F:protein folding chaperone"/>
    <property type="evidence" value="ECO:0000318"/>
    <property type="project" value="GO_Central"/>
</dbReference>
<dbReference type="GO" id="GO:0051082">
    <property type="term" value="F:unfolded protein binding"/>
    <property type="evidence" value="ECO:0000316"/>
    <property type="project" value="SGD"/>
</dbReference>
<dbReference type="GO" id="GO:0051085">
    <property type="term" value="P:chaperone cofactor-dependent protein refolding"/>
    <property type="evidence" value="ECO:0000318"/>
    <property type="project" value="GO_Central"/>
</dbReference>
<dbReference type="GO" id="GO:0006457">
    <property type="term" value="P:protein folding"/>
    <property type="evidence" value="ECO:0000316"/>
    <property type="project" value="SGD"/>
</dbReference>
<dbReference type="GO" id="GO:0006515">
    <property type="term" value="P:protein quality control for misfolded or incompletely synthesized proteins"/>
    <property type="evidence" value="ECO:0000315"/>
    <property type="project" value="SGD"/>
</dbReference>
<dbReference type="GO" id="GO:0042026">
    <property type="term" value="P:protein refolding"/>
    <property type="evidence" value="ECO:0000318"/>
    <property type="project" value="GO_Central"/>
</dbReference>
<dbReference type="GO" id="GO:0006616">
    <property type="term" value="P:SRP-dependent cotranslational protein targeting to membrane, translocation"/>
    <property type="evidence" value="ECO:0000315"/>
    <property type="project" value="SGD"/>
</dbReference>
<dbReference type="CDD" id="cd10233">
    <property type="entry name" value="ASKHA_NBD_HSP70_HSPA1"/>
    <property type="match status" value="1"/>
</dbReference>
<dbReference type="FunFam" id="2.60.34.10:FF:000002">
    <property type="entry name" value="Heat shock 70 kDa"/>
    <property type="match status" value="1"/>
</dbReference>
<dbReference type="FunFam" id="3.90.640.10:FF:000002">
    <property type="entry name" value="Heat shock 70 kDa"/>
    <property type="match status" value="1"/>
</dbReference>
<dbReference type="FunFam" id="3.30.420.40:FF:000172">
    <property type="entry name" value="Heat shock 70 kDa protein"/>
    <property type="match status" value="1"/>
</dbReference>
<dbReference type="FunFam" id="3.30.30.30:FF:000001">
    <property type="entry name" value="heat shock 70 kDa protein-like"/>
    <property type="match status" value="1"/>
</dbReference>
<dbReference type="FunFam" id="3.30.420.40:FF:000135">
    <property type="entry name" value="Heat shock cognate 71 kDa protein"/>
    <property type="match status" value="1"/>
</dbReference>
<dbReference type="FunFam" id="1.20.1270.10:FF:000021">
    <property type="entry name" value="Heat shock protein 70"/>
    <property type="match status" value="1"/>
</dbReference>
<dbReference type="FunFam" id="3.30.420.40:FF:000026">
    <property type="entry name" value="Heat shock protein 70"/>
    <property type="match status" value="1"/>
</dbReference>
<dbReference type="Gene3D" id="1.20.1270.10">
    <property type="match status" value="1"/>
</dbReference>
<dbReference type="Gene3D" id="3.30.30.30">
    <property type="match status" value="1"/>
</dbReference>
<dbReference type="Gene3D" id="3.30.420.40">
    <property type="match status" value="2"/>
</dbReference>
<dbReference type="Gene3D" id="3.90.640.10">
    <property type="entry name" value="Actin, Chain A, domain 4"/>
    <property type="match status" value="1"/>
</dbReference>
<dbReference type="Gene3D" id="2.60.34.10">
    <property type="entry name" value="Substrate Binding Domain Of DNAk, Chain A, domain 1"/>
    <property type="match status" value="1"/>
</dbReference>
<dbReference type="InterPro" id="IPR043129">
    <property type="entry name" value="ATPase_NBD"/>
</dbReference>
<dbReference type="InterPro" id="IPR018181">
    <property type="entry name" value="Heat_shock_70_CS"/>
</dbReference>
<dbReference type="InterPro" id="IPR029048">
    <property type="entry name" value="HSP70_C_sf"/>
</dbReference>
<dbReference type="InterPro" id="IPR029047">
    <property type="entry name" value="HSP70_peptide-bd_sf"/>
</dbReference>
<dbReference type="InterPro" id="IPR013126">
    <property type="entry name" value="Hsp_70_fam"/>
</dbReference>
<dbReference type="NCBIfam" id="NF001413">
    <property type="entry name" value="PRK00290.1"/>
    <property type="match status" value="1"/>
</dbReference>
<dbReference type="PANTHER" id="PTHR19375">
    <property type="entry name" value="HEAT SHOCK PROTEIN 70KDA"/>
    <property type="match status" value="1"/>
</dbReference>
<dbReference type="Pfam" id="PF00012">
    <property type="entry name" value="HSP70"/>
    <property type="match status" value="1"/>
</dbReference>
<dbReference type="PRINTS" id="PR00301">
    <property type="entry name" value="HEATSHOCK70"/>
</dbReference>
<dbReference type="SUPFAM" id="SSF53067">
    <property type="entry name" value="Actin-like ATPase domain"/>
    <property type="match status" value="2"/>
</dbReference>
<dbReference type="SUPFAM" id="SSF100934">
    <property type="entry name" value="Heat shock protein 70kD (HSP70), C-terminal subdomain"/>
    <property type="match status" value="1"/>
</dbReference>
<dbReference type="SUPFAM" id="SSF100920">
    <property type="entry name" value="Heat shock protein 70kD (HSP70), peptide-binding domain"/>
    <property type="match status" value="1"/>
</dbReference>
<dbReference type="PROSITE" id="PS00297">
    <property type="entry name" value="HSP70_1"/>
    <property type="match status" value="1"/>
</dbReference>
<dbReference type="PROSITE" id="PS00329">
    <property type="entry name" value="HSP70_2"/>
    <property type="match status" value="1"/>
</dbReference>
<dbReference type="PROSITE" id="PS01036">
    <property type="entry name" value="HSP70_3"/>
    <property type="match status" value="1"/>
</dbReference>
<organism>
    <name type="scientific">Saccharomyces cerevisiae (strain ATCC 204508 / S288c)</name>
    <name type="common">Baker's yeast</name>
    <dbReference type="NCBI Taxonomy" id="559292"/>
    <lineage>
        <taxon>Eukaryota</taxon>
        <taxon>Fungi</taxon>
        <taxon>Dikarya</taxon>
        <taxon>Ascomycota</taxon>
        <taxon>Saccharomycotina</taxon>
        <taxon>Saccharomycetes</taxon>
        <taxon>Saccharomycetales</taxon>
        <taxon>Saccharomycetaceae</taxon>
        <taxon>Saccharomyces</taxon>
    </lineage>
</organism>
<keyword id="KW-0067">ATP-binding</keyword>
<keyword id="KW-0963">Cytoplasm</keyword>
<keyword id="KW-0547">Nucleotide-binding</keyword>
<keyword id="KW-1185">Reference proteome</keyword>
<keyword id="KW-0346">Stress response</keyword>